<organism>
    <name type="scientific">Prochlorococcus marinus (strain MIT 9301)</name>
    <dbReference type="NCBI Taxonomy" id="167546"/>
    <lineage>
        <taxon>Bacteria</taxon>
        <taxon>Bacillati</taxon>
        <taxon>Cyanobacteriota</taxon>
        <taxon>Cyanophyceae</taxon>
        <taxon>Synechococcales</taxon>
        <taxon>Prochlorococcaceae</taxon>
        <taxon>Prochlorococcus</taxon>
    </lineage>
</organism>
<protein>
    <recommendedName>
        <fullName evidence="1">Crossover junction endodeoxyribonuclease RuvC</fullName>
        <ecNumber evidence="1">3.1.21.10</ecNumber>
    </recommendedName>
    <alternativeName>
        <fullName evidence="1">Holliday junction nuclease RuvC</fullName>
    </alternativeName>
    <alternativeName>
        <fullName evidence="1">Holliday junction resolvase RuvC</fullName>
    </alternativeName>
</protein>
<proteinExistence type="inferred from homology"/>
<sequence>MRIIGIDPGLARVGYGIIEIENERKILLDCGVIETGKDKKEEDRLYEIFQDLNELINHWNPTSAAVEKFFFYRSSTTISVVQARGVIMMVLASKKINVSEYSPAQIKLTIAGSGKASKKDILDAVMYNLDLNKPPKPDDSADALAIALTKLNEDGFN</sequence>
<dbReference type="EC" id="3.1.21.10" evidence="1"/>
<dbReference type="EMBL" id="CP000576">
    <property type="protein sequence ID" value="ABO17783.1"/>
    <property type="molecule type" value="Genomic_DNA"/>
</dbReference>
<dbReference type="RefSeq" id="WP_011863113.1">
    <property type="nucleotide sequence ID" value="NC_009091.1"/>
</dbReference>
<dbReference type="SMR" id="A3PDF8"/>
<dbReference type="STRING" id="167546.P9301_11601"/>
<dbReference type="KEGG" id="pmg:P9301_11601"/>
<dbReference type="eggNOG" id="COG0817">
    <property type="taxonomic scope" value="Bacteria"/>
</dbReference>
<dbReference type="HOGENOM" id="CLU_091257_3_1_3"/>
<dbReference type="OrthoDB" id="9805499at2"/>
<dbReference type="Proteomes" id="UP000001430">
    <property type="component" value="Chromosome"/>
</dbReference>
<dbReference type="GO" id="GO:0005737">
    <property type="term" value="C:cytoplasm"/>
    <property type="evidence" value="ECO:0007669"/>
    <property type="project" value="UniProtKB-SubCell"/>
</dbReference>
<dbReference type="GO" id="GO:0048476">
    <property type="term" value="C:Holliday junction resolvase complex"/>
    <property type="evidence" value="ECO:0007669"/>
    <property type="project" value="UniProtKB-UniRule"/>
</dbReference>
<dbReference type="GO" id="GO:0008821">
    <property type="term" value="F:crossover junction DNA endonuclease activity"/>
    <property type="evidence" value="ECO:0007669"/>
    <property type="project" value="UniProtKB-UniRule"/>
</dbReference>
<dbReference type="GO" id="GO:0003677">
    <property type="term" value="F:DNA binding"/>
    <property type="evidence" value="ECO:0007669"/>
    <property type="project" value="UniProtKB-KW"/>
</dbReference>
<dbReference type="GO" id="GO:0000287">
    <property type="term" value="F:magnesium ion binding"/>
    <property type="evidence" value="ECO:0007669"/>
    <property type="project" value="UniProtKB-UniRule"/>
</dbReference>
<dbReference type="GO" id="GO:0006310">
    <property type="term" value="P:DNA recombination"/>
    <property type="evidence" value="ECO:0007669"/>
    <property type="project" value="UniProtKB-UniRule"/>
</dbReference>
<dbReference type="GO" id="GO:0006281">
    <property type="term" value="P:DNA repair"/>
    <property type="evidence" value="ECO:0007669"/>
    <property type="project" value="UniProtKB-UniRule"/>
</dbReference>
<dbReference type="CDD" id="cd16962">
    <property type="entry name" value="RuvC"/>
    <property type="match status" value="1"/>
</dbReference>
<dbReference type="FunFam" id="3.30.420.10:FF:000002">
    <property type="entry name" value="Crossover junction endodeoxyribonuclease RuvC"/>
    <property type="match status" value="1"/>
</dbReference>
<dbReference type="Gene3D" id="3.30.420.10">
    <property type="entry name" value="Ribonuclease H-like superfamily/Ribonuclease H"/>
    <property type="match status" value="1"/>
</dbReference>
<dbReference type="HAMAP" id="MF_00034">
    <property type="entry name" value="RuvC"/>
    <property type="match status" value="1"/>
</dbReference>
<dbReference type="InterPro" id="IPR012337">
    <property type="entry name" value="RNaseH-like_sf"/>
</dbReference>
<dbReference type="InterPro" id="IPR036397">
    <property type="entry name" value="RNaseH_sf"/>
</dbReference>
<dbReference type="InterPro" id="IPR002176">
    <property type="entry name" value="X-over_junc_endoDNase_RuvC"/>
</dbReference>
<dbReference type="NCBIfam" id="NF000711">
    <property type="entry name" value="PRK00039.2-1"/>
    <property type="match status" value="1"/>
</dbReference>
<dbReference type="PANTHER" id="PTHR30194">
    <property type="entry name" value="CROSSOVER JUNCTION ENDODEOXYRIBONUCLEASE RUVC"/>
    <property type="match status" value="1"/>
</dbReference>
<dbReference type="PANTHER" id="PTHR30194:SF3">
    <property type="entry name" value="CROSSOVER JUNCTION ENDODEOXYRIBONUCLEASE RUVC"/>
    <property type="match status" value="1"/>
</dbReference>
<dbReference type="Pfam" id="PF02075">
    <property type="entry name" value="RuvC"/>
    <property type="match status" value="1"/>
</dbReference>
<dbReference type="PRINTS" id="PR00696">
    <property type="entry name" value="RSOLVASERUVC"/>
</dbReference>
<dbReference type="SUPFAM" id="SSF53098">
    <property type="entry name" value="Ribonuclease H-like"/>
    <property type="match status" value="1"/>
</dbReference>
<accession>A3PDF8</accession>
<evidence type="ECO:0000255" key="1">
    <source>
        <dbReference type="HAMAP-Rule" id="MF_00034"/>
    </source>
</evidence>
<reference key="1">
    <citation type="journal article" date="2007" name="PLoS Genet.">
        <title>Patterns and implications of gene gain and loss in the evolution of Prochlorococcus.</title>
        <authorList>
            <person name="Kettler G.C."/>
            <person name="Martiny A.C."/>
            <person name="Huang K."/>
            <person name="Zucker J."/>
            <person name="Coleman M.L."/>
            <person name="Rodrigue S."/>
            <person name="Chen F."/>
            <person name="Lapidus A."/>
            <person name="Ferriera S."/>
            <person name="Johnson J."/>
            <person name="Steglich C."/>
            <person name="Church G.M."/>
            <person name="Richardson P."/>
            <person name="Chisholm S.W."/>
        </authorList>
    </citation>
    <scope>NUCLEOTIDE SEQUENCE [LARGE SCALE GENOMIC DNA]</scope>
    <source>
        <strain>MIT 9301</strain>
    </source>
</reference>
<gene>
    <name evidence="1" type="primary">ruvC</name>
    <name type="ordered locus">P9301_11601</name>
</gene>
<name>RUVC_PROM0</name>
<keyword id="KW-0963">Cytoplasm</keyword>
<keyword id="KW-0227">DNA damage</keyword>
<keyword id="KW-0233">DNA recombination</keyword>
<keyword id="KW-0234">DNA repair</keyword>
<keyword id="KW-0238">DNA-binding</keyword>
<keyword id="KW-0255">Endonuclease</keyword>
<keyword id="KW-0378">Hydrolase</keyword>
<keyword id="KW-0460">Magnesium</keyword>
<keyword id="KW-0479">Metal-binding</keyword>
<keyword id="KW-0540">Nuclease</keyword>
<keyword id="KW-1185">Reference proteome</keyword>
<comment type="function">
    <text evidence="1">The RuvA-RuvB-RuvC complex processes Holliday junction (HJ) DNA during genetic recombination and DNA repair. Endonuclease that resolves HJ intermediates. Cleaves cruciform DNA by making single-stranded nicks across the HJ at symmetrical positions within the homologous arms, yielding a 5'-phosphate and a 3'-hydroxyl group; requires a central core of homology in the junction. The consensus cleavage sequence is 5'-(A/T)TT(C/G)-3'. Cleavage occurs on the 3'-side of the TT dinucleotide at the point of strand exchange. HJ branch migration catalyzed by RuvA-RuvB allows RuvC to scan DNA until it finds its consensus sequence, where it cleaves and resolves the cruciform DNA.</text>
</comment>
<comment type="catalytic activity">
    <reaction evidence="1">
        <text>Endonucleolytic cleavage at a junction such as a reciprocal single-stranded crossover between two homologous DNA duplexes (Holliday junction).</text>
        <dbReference type="EC" id="3.1.21.10"/>
    </reaction>
</comment>
<comment type="cofactor">
    <cofactor evidence="1">
        <name>Mg(2+)</name>
        <dbReference type="ChEBI" id="CHEBI:18420"/>
    </cofactor>
    <text evidence="1">Binds 2 Mg(2+) ion per subunit.</text>
</comment>
<comment type="subunit">
    <text evidence="1">Homodimer which binds Holliday junction (HJ) DNA. The HJ becomes 2-fold symmetrical on binding to RuvC with unstacked arms; it has a different conformation from HJ DNA in complex with RuvA. In the full resolvosome a probable DNA-RuvA(4)-RuvB(12)-RuvC(2) complex forms which resolves the HJ.</text>
</comment>
<comment type="subcellular location">
    <subcellularLocation>
        <location evidence="1">Cytoplasm</location>
    </subcellularLocation>
</comment>
<comment type="similarity">
    <text evidence="1">Belongs to the RuvC family.</text>
</comment>
<feature type="chain" id="PRO_1000002792" description="Crossover junction endodeoxyribonuclease RuvC">
    <location>
        <begin position="1"/>
        <end position="157"/>
    </location>
</feature>
<feature type="active site" evidence="1">
    <location>
        <position position="7"/>
    </location>
</feature>
<feature type="active site" evidence="1">
    <location>
        <position position="67"/>
    </location>
</feature>
<feature type="active site" evidence="1">
    <location>
        <position position="139"/>
    </location>
</feature>
<feature type="binding site" evidence="1">
    <location>
        <position position="7"/>
    </location>
    <ligand>
        <name>Mg(2+)</name>
        <dbReference type="ChEBI" id="CHEBI:18420"/>
        <label>1</label>
    </ligand>
</feature>
<feature type="binding site" evidence="1">
    <location>
        <position position="67"/>
    </location>
    <ligand>
        <name>Mg(2+)</name>
        <dbReference type="ChEBI" id="CHEBI:18420"/>
        <label>2</label>
    </ligand>
</feature>
<feature type="binding site" evidence="1">
    <location>
        <position position="139"/>
    </location>
    <ligand>
        <name>Mg(2+)</name>
        <dbReference type="ChEBI" id="CHEBI:18420"/>
        <label>1</label>
    </ligand>
</feature>